<feature type="signal peptide" evidence="3">
    <location>
        <begin position="1"/>
        <end position="29"/>
    </location>
</feature>
<feature type="chain" id="PRO_0000010106" description="Follistatin">
    <location>
        <begin position="30"/>
        <end position="344"/>
    </location>
</feature>
<feature type="domain" description="TB" evidence="4">
    <location>
        <begin position="30"/>
        <end position="103"/>
    </location>
</feature>
<feature type="domain" description="Follistatin-like 1">
    <location>
        <begin position="94"/>
        <end position="117"/>
    </location>
</feature>
<feature type="domain" description="Kazal-like 1" evidence="5">
    <location>
        <begin position="112"/>
        <end position="166"/>
    </location>
</feature>
<feature type="domain" description="Follistatin-like 2">
    <location>
        <begin position="167"/>
        <end position="190"/>
    </location>
</feature>
<feature type="domain" description="Kazal-like 2" evidence="5">
    <location>
        <begin position="186"/>
        <end position="241"/>
    </location>
</feature>
<feature type="domain" description="Follistatin-like 3">
    <location>
        <begin position="244"/>
        <end position="268"/>
    </location>
</feature>
<feature type="domain" description="Kazal-like 3" evidence="5">
    <location>
        <begin position="264"/>
        <end position="318"/>
    </location>
</feature>
<feature type="region of interest" description="Disordered" evidence="6">
    <location>
        <begin position="315"/>
        <end position="344"/>
    </location>
</feature>
<feature type="compositionally biased region" description="Acidic residues" evidence="6">
    <location>
        <begin position="321"/>
        <end position="333"/>
    </location>
</feature>
<feature type="glycosylation site" description="N-linked (GlcNAc...) asparagine" evidence="3">
    <location>
        <position position="124"/>
    </location>
</feature>
<feature type="glycosylation site" description="N-linked (GlcNAc...) asparagine" evidence="3">
    <location>
        <position position="288"/>
    </location>
</feature>
<feature type="disulfide bond" evidence="1 4">
    <location>
        <begin position="32"/>
        <end position="55"/>
    </location>
</feature>
<feature type="disulfide bond" evidence="1 4">
    <location>
        <begin position="42"/>
        <end position="88"/>
    </location>
</feature>
<feature type="disulfide bond" evidence="1 4">
    <location>
        <begin position="56"/>
        <end position="91"/>
    </location>
</feature>
<feature type="disulfide bond" evidence="1">
    <location>
        <begin position="95"/>
        <end position="106"/>
    </location>
</feature>
<feature type="disulfide bond" evidence="1">
    <location>
        <begin position="100"/>
        <end position="116"/>
    </location>
</feature>
<feature type="disulfide bond" evidence="1">
    <location>
        <begin position="118"/>
        <end position="150"/>
    </location>
</feature>
<feature type="disulfide bond" evidence="1">
    <location>
        <begin position="122"/>
        <end position="143"/>
    </location>
</feature>
<feature type="disulfide bond" evidence="1">
    <location>
        <begin position="132"/>
        <end position="164"/>
    </location>
</feature>
<feature type="disulfide bond" evidence="1">
    <location>
        <begin position="168"/>
        <end position="179"/>
    </location>
</feature>
<feature type="disulfide bond" evidence="1">
    <location>
        <begin position="173"/>
        <end position="189"/>
    </location>
</feature>
<feature type="disulfide bond" evidence="1">
    <location>
        <begin position="192"/>
        <end position="225"/>
    </location>
</feature>
<feature type="disulfide bond" evidence="1">
    <location>
        <begin position="196"/>
        <end position="218"/>
    </location>
</feature>
<feature type="disulfide bond" evidence="1">
    <location>
        <begin position="207"/>
        <end position="239"/>
    </location>
</feature>
<feature type="disulfide bond" evidence="1">
    <location>
        <begin position="245"/>
        <end position="256"/>
    </location>
</feature>
<feature type="disulfide bond" evidence="1">
    <location>
        <begin position="250"/>
        <end position="267"/>
    </location>
</feature>
<feature type="disulfide bond" evidence="1">
    <location>
        <begin position="270"/>
        <end position="302"/>
    </location>
</feature>
<feature type="disulfide bond" evidence="1">
    <location>
        <begin position="274"/>
        <end position="295"/>
    </location>
</feature>
<feature type="disulfide bond" evidence="1">
    <location>
        <begin position="284"/>
        <end position="316"/>
    </location>
</feature>
<feature type="strand" evidence="10">
    <location>
        <begin position="104"/>
        <end position="108"/>
    </location>
</feature>
<feature type="strand" evidence="10">
    <location>
        <begin position="114"/>
        <end position="118"/>
    </location>
</feature>
<feature type="helix" evidence="10">
    <location>
        <begin position="122"/>
        <end position="124"/>
    </location>
</feature>
<feature type="strand" evidence="10">
    <location>
        <begin position="131"/>
        <end position="133"/>
    </location>
</feature>
<feature type="strand" evidence="10">
    <location>
        <begin position="138"/>
        <end position="141"/>
    </location>
</feature>
<feature type="helix" evidence="10">
    <location>
        <begin position="142"/>
        <end position="151"/>
    </location>
</feature>
<feature type="strand" evidence="10">
    <location>
        <begin position="158"/>
        <end position="162"/>
    </location>
</feature>
<feature type="strand" evidence="11">
    <location>
        <begin position="166"/>
        <end position="168"/>
    </location>
</feature>
<feature type="strand" evidence="11">
    <location>
        <begin position="178"/>
        <end position="181"/>
    </location>
</feature>
<feature type="strand" evidence="11">
    <location>
        <begin position="185"/>
        <end position="190"/>
    </location>
</feature>
<feature type="strand" evidence="11">
    <location>
        <begin position="200"/>
        <end position="202"/>
    </location>
</feature>
<feature type="strand" evidence="11">
    <location>
        <begin position="206"/>
        <end position="208"/>
    </location>
</feature>
<feature type="strand" evidence="11">
    <location>
        <begin position="213"/>
        <end position="216"/>
    </location>
</feature>
<feature type="helix" evidence="11">
    <location>
        <begin position="217"/>
        <end position="227"/>
    </location>
</feature>
<feature type="strand" evidence="11">
    <location>
        <begin position="233"/>
        <end position="238"/>
    </location>
</feature>
<sequence>MVCARHQPGGLCLLLLLLCQFMEDRSAQAGNCWLRQAKNGRCQVLYKTELSKEECCSTGRLSTSWTEEDVNDNTLFKWMIFNGGAPNCIPCKETCENVDCGPGKKCRMNKKNKPRCVCAPDCSNITWKGPVCGLDGKTYRNECALLKARCKEQPELEVQYQGKCKKTCRDVFCPGSSTCVVDQTNNAYCVTCNRICPEPSSSEQSLCGNDGVTYSSACHLRKATCLLGRSIGLAYEGKCIKAKSCEDIQCGGGKKCLWDFKVGRGRCSLCDELCPDSKSDEPVCASDNATYASECAMKEAACSSGVLLEVKHSGSCNSISEETEEEEEEEDQDYSFPISSTLEW</sequence>
<proteinExistence type="evidence at protein level"/>
<name>FST_RAT</name>
<organism>
    <name type="scientific">Rattus norvegicus</name>
    <name type="common">Rat</name>
    <dbReference type="NCBI Taxonomy" id="10116"/>
    <lineage>
        <taxon>Eukaryota</taxon>
        <taxon>Metazoa</taxon>
        <taxon>Chordata</taxon>
        <taxon>Craniata</taxon>
        <taxon>Vertebrata</taxon>
        <taxon>Euteleostomi</taxon>
        <taxon>Mammalia</taxon>
        <taxon>Eutheria</taxon>
        <taxon>Euarchontoglires</taxon>
        <taxon>Glires</taxon>
        <taxon>Rodentia</taxon>
        <taxon>Myomorpha</taxon>
        <taxon>Muroidea</taxon>
        <taxon>Muridae</taxon>
        <taxon>Murinae</taxon>
        <taxon>Rattus</taxon>
    </lineage>
</organism>
<protein>
    <recommendedName>
        <fullName evidence="7">Follistatin</fullName>
        <shortName>FS</shortName>
    </recommendedName>
    <alternativeName>
        <fullName evidence="8">Activin-binding protein</fullName>
    </alternativeName>
</protein>
<gene>
    <name evidence="9" type="primary">Fst</name>
</gene>
<keyword id="KW-0002">3D-structure</keyword>
<keyword id="KW-1015">Disulfide bond</keyword>
<keyword id="KW-0325">Glycoprotein</keyword>
<keyword id="KW-0539">Nucleus</keyword>
<keyword id="KW-1185">Reference proteome</keyword>
<keyword id="KW-0677">Repeat</keyword>
<keyword id="KW-0964">Secreted</keyword>
<keyword id="KW-0732">Signal</keyword>
<comment type="function">
    <text evidence="1 2">Multifunctional regulatory protein whose primary function is to antagonize members of the transforming growth factor beta (TGF-beta) superfamily including activin, myostatin, GDF11 or bone morphogenetic proteins (BMPs). Mechanistically, binds to these ligands in the extracellular space, blocking their type II receptor-binding site to inhibit downstream signaling (By similarity). Plays an essential role in muscle fiber formation and growth both by preventing the repressive effects of myostatin and through SMAD3/AKT/mTOR signaling independently of myostatin (By similarity). Also promotes neural differentiation by antagonizing the action BMP4 (By similarity). Acts as a specific inhibitor of the biosynthesis and secretion of pituitary follicle stimulating hormone (FSH) by sequestering activin A/INHBA. On the other hand, translocates into the nucleus where it down-regulates rRNA synthesis and ribosome biogenesis to maintain cellular energy homeostasis by binding to rDNA (By similarity).</text>
</comment>
<comment type="subunit">
    <text evidence="1">Interacts with GDF11. Interacts with activin A/INHBA. Interacts with myostatin/MSTN.</text>
</comment>
<comment type="interaction">
    <interactant intactId="EBI-5746973">
        <id>P21674</id>
    </interactant>
    <interactant intactId="EBI-8077140">
        <id>P08476</id>
        <label>INHBA</label>
    </interactant>
    <organismsDiffer>true</organismsDiffer>
    <experiments>2</experiments>
</comment>
<comment type="subcellular location">
    <subcellularLocation>
        <location evidence="1">Secreted</location>
    </subcellularLocation>
    <subcellularLocation>
        <location evidence="1">Nucleus</location>
        <location evidence="1">Nucleolus</location>
    </subcellularLocation>
</comment>
<dbReference type="EMBL" id="M31591">
    <property type="protein sequence ID" value="AAB60704.1"/>
    <property type="molecule type" value="Genomic_DNA"/>
</dbReference>
<dbReference type="EMBL" id="M31586">
    <property type="protein sequence ID" value="AAB60704.1"/>
    <property type="status" value="JOINED"/>
    <property type="molecule type" value="Genomic_DNA"/>
</dbReference>
<dbReference type="EMBL" id="M31587">
    <property type="protein sequence ID" value="AAB60704.1"/>
    <property type="status" value="JOINED"/>
    <property type="molecule type" value="Genomic_DNA"/>
</dbReference>
<dbReference type="EMBL" id="M31588">
    <property type="protein sequence ID" value="AAB60704.1"/>
    <property type="status" value="JOINED"/>
    <property type="molecule type" value="Genomic_DNA"/>
</dbReference>
<dbReference type="EMBL" id="M31589">
    <property type="protein sequence ID" value="AAB60704.1"/>
    <property type="status" value="JOINED"/>
    <property type="molecule type" value="Genomic_DNA"/>
</dbReference>
<dbReference type="EMBL" id="M31590">
    <property type="protein sequence ID" value="AAB60704.1"/>
    <property type="status" value="JOINED"/>
    <property type="molecule type" value="Genomic_DNA"/>
</dbReference>
<dbReference type="EMBL" id="S58913">
    <property type="protein sequence ID" value="AAP13905.1"/>
    <property type="molecule type" value="Genomic_DNA"/>
</dbReference>
<dbReference type="PIR" id="I57698">
    <property type="entry name" value="I57698"/>
</dbReference>
<dbReference type="RefSeq" id="NP_036693.1">
    <property type="nucleotide sequence ID" value="NM_012561.4"/>
</dbReference>
<dbReference type="PDB" id="1LR7">
    <property type="method" value="X-ray"/>
    <property type="resolution" value="1.50 A"/>
    <property type="chains" value="A=93-165"/>
</dbReference>
<dbReference type="PDB" id="1LR8">
    <property type="method" value="X-ray"/>
    <property type="resolution" value="2.10 A"/>
    <property type="chains" value="A=93-165"/>
</dbReference>
<dbReference type="PDB" id="1LR9">
    <property type="method" value="X-ray"/>
    <property type="resolution" value="2.50 A"/>
    <property type="chains" value="A=93-165"/>
</dbReference>
<dbReference type="PDB" id="2ARP">
    <property type="method" value="X-ray"/>
    <property type="resolution" value="2.00 A"/>
    <property type="chains" value="F=93-241"/>
</dbReference>
<dbReference type="PDBsum" id="1LR7"/>
<dbReference type="PDBsum" id="1LR8"/>
<dbReference type="PDBsum" id="1LR9"/>
<dbReference type="PDBsum" id="2ARP"/>
<dbReference type="SMR" id="P21674"/>
<dbReference type="BioGRID" id="246544">
    <property type="interactions" value="1"/>
</dbReference>
<dbReference type="FunCoup" id="P21674">
    <property type="interactions" value="215"/>
</dbReference>
<dbReference type="IntAct" id="P21674">
    <property type="interactions" value="2"/>
</dbReference>
<dbReference type="MINT" id="P21674"/>
<dbReference type="STRING" id="10116.ENSRNOP00000015680"/>
<dbReference type="MEROPS" id="I01.966"/>
<dbReference type="GlyCosmos" id="P21674">
    <property type="glycosylation" value="2 sites, No reported glycans"/>
</dbReference>
<dbReference type="GlyGen" id="P21674">
    <property type="glycosylation" value="3 sites"/>
</dbReference>
<dbReference type="PhosphoSitePlus" id="P21674"/>
<dbReference type="PaxDb" id="10116-ENSRNOP00000015680"/>
<dbReference type="Ensembl" id="ENSRNOT00000015680.5">
    <property type="protein sequence ID" value="ENSRNOP00000015680.1"/>
    <property type="gene ID" value="ENSRNOG00000011631.5"/>
</dbReference>
<dbReference type="GeneID" id="24373"/>
<dbReference type="KEGG" id="rno:24373"/>
<dbReference type="AGR" id="RGD:2633"/>
<dbReference type="CTD" id="10468"/>
<dbReference type="RGD" id="2633">
    <property type="gene designation" value="Fst"/>
</dbReference>
<dbReference type="eggNOG" id="KOG3649">
    <property type="taxonomic scope" value="Eukaryota"/>
</dbReference>
<dbReference type="GeneTree" id="ENSGT00940000157072"/>
<dbReference type="HOGENOM" id="CLU_050745_0_0_1"/>
<dbReference type="InParanoid" id="P21674"/>
<dbReference type="OMA" id="DYKAYVH"/>
<dbReference type="OrthoDB" id="6614329at2759"/>
<dbReference type="PhylomeDB" id="P21674"/>
<dbReference type="TreeFam" id="TF106409"/>
<dbReference type="Reactome" id="R-RNO-2473224">
    <property type="pathway name" value="Antagonism of Activin by Follistatin"/>
</dbReference>
<dbReference type="EvolutionaryTrace" id="P21674"/>
<dbReference type="PRO" id="PR:P21674"/>
<dbReference type="Proteomes" id="UP000002494">
    <property type="component" value="Chromosome 2"/>
</dbReference>
<dbReference type="Bgee" id="ENSRNOG00000011631">
    <property type="expression patterns" value="Expressed in ovary and 16 other cell types or tissues"/>
</dbReference>
<dbReference type="GO" id="GO:0005737">
    <property type="term" value="C:cytoplasm"/>
    <property type="evidence" value="ECO:0000266"/>
    <property type="project" value="RGD"/>
</dbReference>
<dbReference type="GO" id="GO:0005576">
    <property type="term" value="C:extracellular region"/>
    <property type="evidence" value="ECO:0000318"/>
    <property type="project" value="GO_Central"/>
</dbReference>
<dbReference type="GO" id="GO:0005615">
    <property type="term" value="C:extracellular space"/>
    <property type="evidence" value="ECO:0000318"/>
    <property type="project" value="GO_Central"/>
</dbReference>
<dbReference type="GO" id="GO:0005730">
    <property type="term" value="C:nucleolus"/>
    <property type="evidence" value="ECO:0007669"/>
    <property type="project" value="UniProtKB-SubCell"/>
</dbReference>
<dbReference type="GO" id="GO:0005634">
    <property type="term" value="C:nucleus"/>
    <property type="evidence" value="ECO:0000266"/>
    <property type="project" value="RGD"/>
</dbReference>
<dbReference type="GO" id="GO:0048185">
    <property type="term" value="F:activin binding"/>
    <property type="evidence" value="ECO:0000266"/>
    <property type="project" value="RGD"/>
</dbReference>
<dbReference type="GO" id="GO:0038102">
    <property type="term" value="F:activin receptor antagonist activity"/>
    <property type="evidence" value="ECO:0000266"/>
    <property type="project" value="RGD"/>
</dbReference>
<dbReference type="GO" id="GO:0043395">
    <property type="term" value="F:heparan sulfate proteoglycan binding"/>
    <property type="evidence" value="ECO:0000314"/>
    <property type="project" value="RGD"/>
</dbReference>
<dbReference type="GO" id="GO:0036305">
    <property type="term" value="P:ameloblast differentiation"/>
    <property type="evidence" value="ECO:0000266"/>
    <property type="project" value="RGD"/>
</dbReference>
<dbReference type="GO" id="GO:0030509">
    <property type="term" value="P:BMP signaling pathway"/>
    <property type="evidence" value="ECO:0000266"/>
    <property type="project" value="RGD"/>
</dbReference>
<dbReference type="GO" id="GO:0030154">
    <property type="term" value="P:cell differentiation"/>
    <property type="evidence" value="ECO:0000318"/>
    <property type="project" value="GO_Central"/>
</dbReference>
<dbReference type="GO" id="GO:0071363">
    <property type="term" value="P:cellular response to growth factor stimulus"/>
    <property type="evidence" value="ECO:0000270"/>
    <property type="project" value="RGD"/>
</dbReference>
<dbReference type="GO" id="GO:0008585">
    <property type="term" value="P:female gonad development"/>
    <property type="evidence" value="ECO:0000266"/>
    <property type="project" value="RGD"/>
</dbReference>
<dbReference type="GO" id="GO:0007276">
    <property type="term" value="P:gamete generation"/>
    <property type="evidence" value="ECO:0000266"/>
    <property type="project" value="RGD"/>
</dbReference>
<dbReference type="GO" id="GO:0031069">
    <property type="term" value="P:hair follicle morphogenesis"/>
    <property type="evidence" value="ECO:0000266"/>
    <property type="project" value="RGD"/>
</dbReference>
<dbReference type="GO" id="GO:0002244">
    <property type="term" value="P:hematopoietic progenitor cell differentiation"/>
    <property type="evidence" value="ECO:0000266"/>
    <property type="project" value="RGD"/>
</dbReference>
<dbReference type="GO" id="GO:0043616">
    <property type="term" value="P:keratinocyte proliferation"/>
    <property type="evidence" value="ECO:0000266"/>
    <property type="project" value="RGD"/>
</dbReference>
<dbReference type="GO" id="GO:0032926">
    <property type="term" value="P:negative regulation of activin receptor signaling pathway"/>
    <property type="evidence" value="ECO:0000266"/>
    <property type="project" value="RGD"/>
</dbReference>
<dbReference type="GO" id="GO:0030857">
    <property type="term" value="P:negative regulation of epithelial cell differentiation"/>
    <property type="evidence" value="ECO:0000266"/>
    <property type="project" value="RGD"/>
</dbReference>
<dbReference type="GO" id="GO:0046882">
    <property type="term" value="P:negative regulation of follicle-stimulating hormone secretion"/>
    <property type="evidence" value="ECO:0000304"/>
    <property type="project" value="RGD"/>
</dbReference>
<dbReference type="GO" id="GO:0000122">
    <property type="term" value="P:negative regulation of transcription by RNA polymerase II"/>
    <property type="evidence" value="ECO:0000266"/>
    <property type="project" value="RGD"/>
</dbReference>
<dbReference type="GO" id="GO:0042475">
    <property type="term" value="P:odontogenesis of dentin-containing tooth"/>
    <property type="evidence" value="ECO:0000266"/>
    <property type="project" value="RGD"/>
</dbReference>
<dbReference type="GO" id="GO:0007389">
    <property type="term" value="P:pattern specification process"/>
    <property type="evidence" value="ECO:0000266"/>
    <property type="project" value="RGD"/>
</dbReference>
<dbReference type="GO" id="GO:0051798">
    <property type="term" value="P:positive regulation of hair follicle development"/>
    <property type="evidence" value="ECO:0000266"/>
    <property type="project" value="RGD"/>
</dbReference>
<dbReference type="GO" id="GO:0030510">
    <property type="term" value="P:regulation of BMP signaling pathway"/>
    <property type="evidence" value="ECO:0000318"/>
    <property type="project" value="GO_Central"/>
</dbReference>
<dbReference type="GO" id="GO:0001501">
    <property type="term" value="P:skeletal system development"/>
    <property type="evidence" value="ECO:0000266"/>
    <property type="project" value="RGD"/>
</dbReference>
<dbReference type="CDD" id="cd00104">
    <property type="entry name" value="KAZAL_FS"/>
    <property type="match status" value="2"/>
</dbReference>
<dbReference type="FunFam" id="3.30.60.30:FF:000006">
    <property type="entry name" value="Follistatin a"/>
    <property type="match status" value="1"/>
</dbReference>
<dbReference type="FunFam" id="3.30.60.30:FF:000009">
    <property type="entry name" value="Follistatin a"/>
    <property type="match status" value="1"/>
</dbReference>
<dbReference type="FunFam" id="3.90.290.10:FF:000013">
    <property type="entry name" value="Follistatin a"/>
    <property type="match status" value="1"/>
</dbReference>
<dbReference type="Gene3D" id="3.30.60.30">
    <property type="match status" value="3"/>
</dbReference>
<dbReference type="Gene3D" id="3.90.290.10">
    <property type="entry name" value="TGF-beta binding (TB) domain"/>
    <property type="match status" value="1"/>
</dbReference>
<dbReference type="IDEAL" id="IID50202"/>
<dbReference type="InterPro" id="IPR003645">
    <property type="entry name" value="Fol_N"/>
</dbReference>
<dbReference type="InterPro" id="IPR015369">
    <property type="entry name" value="Follistatin/Osteonectin_EGF"/>
</dbReference>
<dbReference type="InterPro" id="IPR002350">
    <property type="entry name" value="Kazal_dom"/>
</dbReference>
<dbReference type="InterPro" id="IPR036058">
    <property type="entry name" value="Kazal_dom_sf"/>
</dbReference>
<dbReference type="InterPro" id="IPR050653">
    <property type="entry name" value="Prot_Inhib_GrowthFact_Antg"/>
</dbReference>
<dbReference type="InterPro" id="IPR017878">
    <property type="entry name" value="TB_dom"/>
</dbReference>
<dbReference type="InterPro" id="IPR036773">
    <property type="entry name" value="TB_dom_sf"/>
</dbReference>
<dbReference type="PANTHER" id="PTHR10913:SF45">
    <property type="entry name" value="FOLLISTATIN, ISOFORM A-RELATED"/>
    <property type="match status" value="1"/>
</dbReference>
<dbReference type="PANTHER" id="PTHR10913">
    <property type="entry name" value="FOLLISTATIN-RELATED"/>
    <property type="match status" value="1"/>
</dbReference>
<dbReference type="Pfam" id="PF09289">
    <property type="entry name" value="FOLN"/>
    <property type="match status" value="1"/>
</dbReference>
<dbReference type="Pfam" id="PF21333">
    <property type="entry name" value="FST_N"/>
    <property type="match status" value="1"/>
</dbReference>
<dbReference type="Pfam" id="PF07648">
    <property type="entry name" value="Kazal_2"/>
    <property type="match status" value="3"/>
</dbReference>
<dbReference type="SMART" id="SM00274">
    <property type="entry name" value="FOLN"/>
    <property type="match status" value="3"/>
</dbReference>
<dbReference type="SMART" id="SM00280">
    <property type="entry name" value="KAZAL"/>
    <property type="match status" value="3"/>
</dbReference>
<dbReference type="SUPFAM" id="SSF100895">
    <property type="entry name" value="Kazal-type serine protease inhibitors"/>
    <property type="match status" value="3"/>
</dbReference>
<dbReference type="SUPFAM" id="SSF57581">
    <property type="entry name" value="TB module/8-cys domain"/>
    <property type="match status" value="1"/>
</dbReference>
<dbReference type="PROSITE" id="PS51465">
    <property type="entry name" value="KAZAL_2"/>
    <property type="match status" value="3"/>
</dbReference>
<dbReference type="PROSITE" id="PS51364">
    <property type="entry name" value="TB"/>
    <property type="match status" value="1"/>
</dbReference>
<accession>P21674</accession>
<accession>Q80XW7</accession>
<reference key="1">
    <citation type="journal article" date="1989" name="Mol. Endocrinol.">
        <title>Follistatin gene expression in the ovary and extragonadal tissues.</title>
        <authorList>
            <person name="Shimasaki S."/>
            <person name="Koga M."/>
            <person name="Buscaglia M.L."/>
            <person name="Simmons D.M."/>
            <person name="Bicsak T.A."/>
            <person name="Ling N."/>
        </authorList>
    </citation>
    <scope>NUCLEOTIDE SEQUENCE [GENOMIC DNA]</scope>
    <source>
        <tissue>Ovary</tissue>
    </source>
</reference>
<reference key="2">
    <citation type="journal article" date="1993" name="Mol. Cell. Endocrinol.">
        <title>Structural and functional characterization of the rat follistatin (activin-binding protein) gene promoter.</title>
        <authorList>
            <person name="Miyanaga K."/>
            <person name="Shimasaki S."/>
        </authorList>
    </citation>
    <scope>NUCLEOTIDE SEQUENCE [GENOMIC DNA] OF 1-28</scope>
</reference>
<reference key="3">
    <citation type="journal article" date="2003" name="J. Biol. Chem.">
        <title>Crystal structures of the heparan sulfate-binding domain of follistatin. Insights into ligand binding.</title>
        <authorList>
            <person name="Innis C.A."/>
            <person name="Hyvonen M."/>
        </authorList>
    </citation>
    <scope>X-RAY CRYSTALLOGRAPHY (1.5 ANGSTROMS) OF 93-165 ALONE AND IN COMPLEX WITH HEPARIN ANALOGS</scope>
    <scope>DISULFIDE BONDS</scope>
</reference>
<reference key="4">
    <citation type="journal article" date="2006" name="EMBO J.">
        <title>Structural basis for the inhibition of activin signalling by follistatin.</title>
        <authorList>
            <person name="Harrington A.E."/>
            <person name="Morris-Triggs S.A."/>
            <person name="Ruotolo B.T."/>
            <person name="Robinson C.V."/>
            <person name="Ohnuma S."/>
            <person name="Hyvonen M."/>
        </authorList>
    </citation>
    <scope>X-RAY CRYSTALLOGRAPHY (2.0 ANGSTROMS) OF 93-241 IN COMPLEX WITH ACTIVIN A</scope>
    <scope>DISULFIDE BONDS</scope>
</reference>
<evidence type="ECO:0000250" key="1">
    <source>
        <dbReference type="UniProtKB" id="P19883"/>
    </source>
</evidence>
<evidence type="ECO:0000250" key="2">
    <source>
        <dbReference type="UniProtKB" id="P47931"/>
    </source>
</evidence>
<evidence type="ECO:0000255" key="3"/>
<evidence type="ECO:0000255" key="4">
    <source>
        <dbReference type="PROSITE-ProRule" id="PRU00697"/>
    </source>
</evidence>
<evidence type="ECO:0000255" key="5">
    <source>
        <dbReference type="PROSITE-ProRule" id="PRU00798"/>
    </source>
</evidence>
<evidence type="ECO:0000256" key="6">
    <source>
        <dbReference type="SAM" id="MobiDB-lite"/>
    </source>
</evidence>
<evidence type="ECO:0000303" key="7">
    <source>
    </source>
</evidence>
<evidence type="ECO:0000303" key="8">
    <source>
    </source>
</evidence>
<evidence type="ECO:0000312" key="9">
    <source>
        <dbReference type="RGD" id="2633"/>
    </source>
</evidence>
<evidence type="ECO:0007829" key="10">
    <source>
        <dbReference type="PDB" id="1LR7"/>
    </source>
</evidence>
<evidence type="ECO:0007829" key="11">
    <source>
        <dbReference type="PDB" id="2ARP"/>
    </source>
</evidence>